<keyword id="KW-0210">Decarboxylase</keyword>
<keyword id="KW-0456">Lyase</keyword>
<keyword id="KW-0663">Pyridoxal phosphate</keyword>
<keyword id="KW-1185">Reference proteome</keyword>
<name>SDC1_ORYSJ</name>
<proteinExistence type="inferred from homology"/>
<organism>
    <name type="scientific">Oryza sativa subsp. japonica</name>
    <name type="common">Rice</name>
    <dbReference type="NCBI Taxonomy" id="39947"/>
    <lineage>
        <taxon>Eukaryota</taxon>
        <taxon>Viridiplantae</taxon>
        <taxon>Streptophyta</taxon>
        <taxon>Embryophyta</taxon>
        <taxon>Tracheophyta</taxon>
        <taxon>Spermatophyta</taxon>
        <taxon>Magnoliopsida</taxon>
        <taxon>Liliopsida</taxon>
        <taxon>Poales</taxon>
        <taxon>Poaceae</taxon>
        <taxon>BOP clade</taxon>
        <taxon>Oryzoideae</taxon>
        <taxon>Oryzeae</taxon>
        <taxon>Oryzinae</taxon>
        <taxon>Oryza</taxon>
        <taxon>Oryza sativa</taxon>
    </lineage>
</organism>
<feature type="chain" id="PRO_0000429508" description="Serine decarboxylase 1">
    <location>
        <begin position="1"/>
        <end position="482"/>
    </location>
</feature>
<feature type="region of interest" description="Disordered" evidence="2">
    <location>
        <begin position="36"/>
        <end position="55"/>
    </location>
</feature>
<feature type="binding site" evidence="1">
    <location>
        <position position="200"/>
    </location>
    <ligand>
        <name>substrate</name>
    </ligand>
</feature>
<feature type="modified residue" description="N6-(pyridoxal phosphate)lysine" evidence="1">
    <location>
        <position position="312"/>
    </location>
</feature>
<gene>
    <name type="primary">SDC1</name>
    <name type="ordered locus">Os02g0541325</name>
    <name type="ordered locus">LOC_Os02g33710</name>
    <name type="ORF">OJ1298_H07.24</name>
    <name type="ORF">OsJ_07054</name>
    <name type="ORF">P0472F10.2</name>
</gene>
<accession>Q6ESZ9</accession>
<accession>Q0E0L0</accession>
<protein>
    <recommendedName>
        <fullName>Serine decarboxylase 1</fullName>
        <ecNumber>4.1.1.-</ecNumber>
    </recommendedName>
</protein>
<sequence length="482" mass="53874">MVGSVGNGLVDLGGAAVAVNGVGKGMRPEAVAVAMEVESPPRPAEEEGEGSPTRREIVLGRNVHTASFAVKEPDADDEETGEREAAMASVLALYRRNLVERTKHHLGYPYNLDFDYGALGQLQHFSINNLGDPFIESNYGVHSRQFEVGVLDWFARIWELEKNEYWGYITNCGTEGNLHGILVGREVFPDGILYASRESHYSVFKAARMYRMDCVKVDTLISGEIDCEDFQRKLLLNRDKPAIINVNIGTTVKGAVDDLDLVIKTLEEGGFKDRFYIHCDGALFGLMIPFVKKAPKVSFKKPIGSVSVSGHKFVGCPMPCGVQITRLEHINRLSSNVEYLASRDATIMGSRNGHAPIFLWYTLNRKGYRGFQKEVQKCLRNAHYLKDRLKEAGIGAMLNELSSTVVFERPKDEEFVRRWQLACEGNIAHVVVMPSVTIDKLDYFLNELTEKRATWYQDGSCQPPCLAKDVGEENCLCSIHKK</sequence>
<comment type="function">
    <text evidence="1">Catalyzes the biosynthesis of ethanolamine from serine. Decarboxylation of free serine is the major source of ethanolamine production in plants and ethanolamine metabolism is crucial for the synthesis of choline, phosphatidylethanolamine (PE) and phosphatidylcholine (PC), and thus for plant growth (By similarity).</text>
</comment>
<comment type="catalytic activity">
    <reaction>
        <text>L-serine + H(+) = ethanolamine + CO2</text>
        <dbReference type="Rhea" id="RHEA:45824"/>
        <dbReference type="ChEBI" id="CHEBI:15378"/>
        <dbReference type="ChEBI" id="CHEBI:16526"/>
        <dbReference type="ChEBI" id="CHEBI:33384"/>
        <dbReference type="ChEBI" id="CHEBI:57603"/>
    </reaction>
</comment>
<comment type="cofactor">
    <cofactor evidence="1">
        <name>pyridoxal 5'-phosphate</name>
        <dbReference type="ChEBI" id="CHEBI:597326"/>
    </cofactor>
</comment>
<comment type="similarity">
    <text evidence="3">Belongs to the group II decarboxylase family.</text>
</comment>
<comment type="sequence caution" evidence="3">
    <conflict type="erroneous gene model prediction">
        <sequence resource="EMBL-CDS" id="BAF08978"/>
    </conflict>
</comment>
<dbReference type="EC" id="4.1.1.-"/>
<dbReference type="EMBL" id="AP004847">
    <property type="protein sequence ID" value="BAD28070.1"/>
    <property type="molecule type" value="Genomic_DNA"/>
</dbReference>
<dbReference type="EMBL" id="AP004877">
    <property type="protein sequence ID" value="BAD28221.1"/>
    <property type="molecule type" value="Genomic_DNA"/>
</dbReference>
<dbReference type="EMBL" id="AP008208">
    <property type="protein sequence ID" value="BAF08978.2"/>
    <property type="status" value="ALT_SEQ"/>
    <property type="molecule type" value="Genomic_DNA"/>
</dbReference>
<dbReference type="EMBL" id="AP014958">
    <property type="status" value="NOT_ANNOTATED_CDS"/>
    <property type="molecule type" value="Genomic_DNA"/>
</dbReference>
<dbReference type="EMBL" id="CM000139">
    <property type="protein sequence ID" value="EAZ23358.1"/>
    <property type="molecule type" value="Genomic_DNA"/>
</dbReference>
<dbReference type="RefSeq" id="XP_015626683.1">
    <property type="nucleotide sequence ID" value="XM_015771197.1"/>
</dbReference>
<dbReference type="SMR" id="Q6ESZ9"/>
<dbReference type="FunCoup" id="Q6ESZ9">
    <property type="interactions" value="362"/>
</dbReference>
<dbReference type="STRING" id="39947.Q6ESZ9"/>
<dbReference type="PaxDb" id="39947-Q6ESZ9"/>
<dbReference type="KEGG" id="dosa:Os02g0541300"/>
<dbReference type="eggNOG" id="KOG0629">
    <property type="taxonomic scope" value="Eukaryota"/>
</dbReference>
<dbReference type="HOGENOM" id="CLU_028929_0_1_1"/>
<dbReference type="InParanoid" id="Q6ESZ9"/>
<dbReference type="OrthoDB" id="2161780at2759"/>
<dbReference type="PlantReactome" id="R-OSA-1119556">
    <property type="pathway name" value="Choline biosynthesis I"/>
</dbReference>
<dbReference type="Proteomes" id="UP000000763">
    <property type="component" value="Chromosome 2"/>
</dbReference>
<dbReference type="Proteomes" id="UP000007752">
    <property type="component" value="Chromosome 2"/>
</dbReference>
<dbReference type="Proteomes" id="UP000059680">
    <property type="component" value="Chromosome 2"/>
</dbReference>
<dbReference type="GO" id="GO:0030170">
    <property type="term" value="F:pyridoxal phosphate binding"/>
    <property type="evidence" value="ECO:0007669"/>
    <property type="project" value="InterPro"/>
</dbReference>
<dbReference type="GO" id="GO:0102705">
    <property type="term" value="F:serine decarboxylase activity"/>
    <property type="evidence" value="ECO:0007669"/>
    <property type="project" value="RHEA"/>
</dbReference>
<dbReference type="GO" id="GO:0019752">
    <property type="term" value="P:carboxylic acid metabolic process"/>
    <property type="evidence" value="ECO:0007669"/>
    <property type="project" value="InterPro"/>
</dbReference>
<dbReference type="FunFam" id="3.40.640.10:FF:000069">
    <property type="entry name" value="Serine decarboxylase 1"/>
    <property type="match status" value="1"/>
</dbReference>
<dbReference type="Gene3D" id="3.90.1150.10">
    <property type="entry name" value="Aspartate Aminotransferase, domain 1"/>
    <property type="match status" value="1"/>
</dbReference>
<dbReference type="Gene3D" id="3.40.640.10">
    <property type="entry name" value="Type I PLP-dependent aspartate aminotransferase-like (Major domain)"/>
    <property type="match status" value="1"/>
</dbReference>
<dbReference type="InterPro" id="IPR051151">
    <property type="entry name" value="Group_II_Decarboxylase"/>
</dbReference>
<dbReference type="InterPro" id="IPR002129">
    <property type="entry name" value="PyrdxlP-dep_de-COase"/>
</dbReference>
<dbReference type="InterPro" id="IPR015424">
    <property type="entry name" value="PyrdxlP-dep_Trfase"/>
</dbReference>
<dbReference type="InterPro" id="IPR015421">
    <property type="entry name" value="PyrdxlP-dep_Trfase_major"/>
</dbReference>
<dbReference type="InterPro" id="IPR015422">
    <property type="entry name" value="PyrdxlP-dep_Trfase_small"/>
</dbReference>
<dbReference type="InterPro" id="IPR021115">
    <property type="entry name" value="Pyridoxal-P_BS"/>
</dbReference>
<dbReference type="NCBIfam" id="NF002748">
    <property type="entry name" value="PRK02769.1"/>
    <property type="match status" value="1"/>
</dbReference>
<dbReference type="PANTHER" id="PTHR46101">
    <property type="match status" value="1"/>
</dbReference>
<dbReference type="PANTHER" id="PTHR46101:SF2">
    <property type="entry name" value="SERINE DECARBOXYLASE"/>
    <property type="match status" value="1"/>
</dbReference>
<dbReference type="Pfam" id="PF00282">
    <property type="entry name" value="Pyridoxal_deC"/>
    <property type="match status" value="1"/>
</dbReference>
<dbReference type="SUPFAM" id="SSF53383">
    <property type="entry name" value="PLP-dependent transferases"/>
    <property type="match status" value="1"/>
</dbReference>
<dbReference type="PROSITE" id="PS00392">
    <property type="entry name" value="DDC_GAD_HDC_YDC"/>
    <property type="match status" value="1"/>
</dbReference>
<reference key="1">
    <citation type="journal article" date="2005" name="Nature">
        <title>The map-based sequence of the rice genome.</title>
        <authorList>
            <consortium name="International rice genome sequencing project (IRGSP)"/>
        </authorList>
    </citation>
    <scope>NUCLEOTIDE SEQUENCE [LARGE SCALE GENOMIC DNA]</scope>
    <source>
        <strain>cv. Nipponbare</strain>
    </source>
</reference>
<reference key="2">
    <citation type="journal article" date="2008" name="Nucleic Acids Res.">
        <title>The rice annotation project database (RAP-DB): 2008 update.</title>
        <authorList>
            <consortium name="The rice annotation project (RAP)"/>
        </authorList>
    </citation>
    <scope>GENOME REANNOTATION</scope>
    <source>
        <strain>cv. Nipponbare</strain>
    </source>
</reference>
<reference key="3">
    <citation type="journal article" date="2013" name="Rice">
        <title>Improvement of the Oryza sativa Nipponbare reference genome using next generation sequence and optical map data.</title>
        <authorList>
            <person name="Kawahara Y."/>
            <person name="de la Bastide M."/>
            <person name="Hamilton J.P."/>
            <person name="Kanamori H."/>
            <person name="McCombie W.R."/>
            <person name="Ouyang S."/>
            <person name="Schwartz D.C."/>
            <person name="Tanaka T."/>
            <person name="Wu J."/>
            <person name="Zhou S."/>
            <person name="Childs K.L."/>
            <person name="Davidson R.M."/>
            <person name="Lin H."/>
            <person name="Quesada-Ocampo L."/>
            <person name="Vaillancourt B."/>
            <person name="Sakai H."/>
            <person name="Lee S.S."/>
            <person name="Kim J."/>
            <person name="Numa H."/>
            <person name="Itoh T."/>
            <person name="Buell C.R."/>
            <person name="Matsumoto T."/>
        </authorList>
    </citation>
    <scope>GENOME REANNOTATION</scope>
    <source>
        <strain>cv. Nipponbare</strain>
    </source>
</reference>
<reference key="4">
    <citation type="journal article" date="2005" name="PLoS Biol.">
        <title>The genomes of Oryza sativa: a history of duplications.</title>
        <authorList>
            <person name="Yu J."/>
            <person name="Wang J."/>
            <person name="Lin W."/>
            <person name="Li S."/>
            <person name="Li H."/>
            <person name="Zhou J."/>
            <person name="Ni P."/>
            <person name="Dong W."/>
            <person name="Hu S."/>
            <person name="Zeng C."/>
            <person name="Zhang J."/>
            <person name="Zhang Y."/>
            <person name="Li R."/>
            <person name="Xu Z."/>
            <person name="Li S."/>
            <person name="Li X."/>
            <person name="Zheng H."/>
            <person name="Cong L."/>
            <person name="Lin L."/>
            <person name="Yin J."/>
            <person name="Geng J."/>
            <person name="Li G."/>
            <person name="Shi J."/>
            <person name="Liu J."/>
            <person name="Lv H."/>
            <person name="Li J."/>
            <person name="Wang J."/>
            <person name="Deng Y."/>
            <person name="Ran L."/>
            <person name="Shi X."/>
            <person name="Wang X."/>
            <person name="Wu Q."/>
            <person name="Li C."/>
            <person name="Ren X."/>
            <person name="Wang J."/>
            <person name="Wang X."/>
            <person name="Li D."/>
            <person name="Liu D."/>
            <person name="Zhang X."/>
            <person name="Ji Z."/>
            <person name="Zhao W."/>
            <person name="Sun Y."/>
            <person name="Zhang Z."/>
            <person name="Bao J."/>
            <person name="Han Y."/>
            <person name="Dong L."/>
            <person name="Ji J."/>
            <person name="Chen P."/>
            <person name="Wu S."/>
            <person name="Liu J."/>
            <person name="Xiao Y."/>
            <person name="Bu D."/>
            <person name="Tan J."/>
            <person name="Yang L."/>
            <person name="Ye C."/>
            <person name="Zhang J."/>
            <person name="Xu J."/>
            <person name="Zhou Y."/>
            <person name="Yu Y."/>
            <person name="Zhang B."/>
            <person name="Zhuang S."/>
            <person name="Wei H."/>
            <person name="Liu B."/>
            <person name="Lei M."/>
            <person name="Yu H."/>
            <person name="Li Y."/>
            <person name="Xu H."/>
            <person name="Wei S."/>
            <person name="He X."/>
            <person name="Fang L."/>
            <person name="Zhang Z."/>
            <person name="Zhang Y."/>
            <person name="Huang X."/>
            <person name="Su Z."/>
            <person name="Tong W."/>
            <person name="Li J."/>
            <person name="Tong Z."/>
            <person name="Li S."/>
            <person name="Ye J."/>
            <person name="Wang L."/>
            <person name="Fang L."/>
            <person name="Lei T."/>
            <person name="Chen C.-S."/>
            <person name="Chen H.-C."/>
            <person name="Xu Z."/>
            <person name="Li H."/>
            <person name="Huang H."/>
            <person name="Zhang F."/>
            <person name="Xu H."/>
            <person name="Li N."/>
            <person name="Zhao C."/>
            <person name="Li S."/>
            <person name="Dong L."/>
            <person name="Huang Y."/>
            <person name="Li L."/>
            <person name="Xi Y."/>
            <person name="Qi Q."/>
            <person name="Li W."/>
            <person name="Zhang B."/>
            <person name="Hu W."/>
            <person name="Zhang Y."/>
            <person name="Tian X."/>
            <person name="Jiao Y."/>
            <person name="Liang X."/>
            <person name="Jin J."/>
            <person name="Gao L."/>
            <person name="Zheng W."/>
            <person name="Hao B."/>
            <person name="Liu S.-M."/>
            <person name="Wang W."/>
            <person name="Yuan L."/>
            <person name="Cao M."/>
            <person name="McDermott J."/>
            <person name="Samudrala R."/>
            <person name="Wang J."/>
            <person name="Wong G.K.-S."/>
            <person name="Yang H."/>
        </authorList>
    </citation>
    <scope>NUCLEOTIDE SEQUENCE [LARGE SCALE GENOMIC DNA]</scope>
    <source>
        <strain>cv. Nipponbare</strain>
    </source>
</reference>
<evidence type="ECO:0000250" key="1"/>
<evidence type="ECO:0000256" key="2">
    <source>
        <dbReference type="SAM" id="MobiDB-lite"/>
    </source>
</evidence>
<evidence type="ECO:0000305" key="3"/>